<proteinExistence type="inferred from homology"/>
<organism>
    <name type="scientific">Staphylococcus carnosus (strain TM300)</name>
    <dbReference type="NCBI Taxonomy" id="396513"/>
    <lineage>
        <taxon>Bacteria</taxon>
        <taxon>Bacillati</taxon>
        <taxon>Bacillota</taxon>
        <taxon>Bacilli</taxon>
        <taxon>Bacillales</taxon>
        <taxon>Staphylococcaceae</taxon>
        <taxon>Staphylococcus</taxon>
    </lineage>
</organism>
<comment type="function">
    <text evidence="1">Binds directly to 23S ribosomal RNA and is necessary for the in vitro assembly process of the 50S ribosomal subunit. It is not involved in the protein synthesizing functions of that subunit.</text>
</comment>
<comment type="similarity">
    <text evidence="1">Belongs to the bacterial ribosomal protein bL20 family.</text>
</comment>
<gene>
    <name evidence="1" type="primary">rplT</name>
    <name type="ordered locus">Sca_1284</name>
</gene>
<reference key="1">
    <citation type="journal article" date="2009" name="Appl. Environ. Microbiol.">
        <title>Genome analysis of the meat starter culture bacterium Staphylococcus carnosus TM300.</title>
        <authorList>
            <person name="Rosenstein R."/>
            <person name="Nerz C."/>
            <person name="Biswas L."/>
            <person name="Resch A."/>
            <person name="Raddatz G."/>
            <person name="Schuster S.C."/>
            <person name="Goetz F."/>
        </authorList>
    </citation>
    <scope>NUCLEOTIDE SEQUENCE [LARGE SCALE GENOMIC DNA]</scope>
    <source>
        <strain>TM300</strain>
    </source>
</reference>
<feature type="chain" id="PRO_1000193977" description="Large ribosomal subunit protein bL20">
    <location>
        <begin position="1"/>
        <end position="118"/>
    </location>
</feature>
<protein>
    <recommendedName>
        <fullName evidence="1">Large ribosomal subunit protein bL20</fullName>
    </recommendedName>
    <alternativeName>
        <fullName evidence="2">50S ribosomal protein L20</fullName>
    </alternativeName>
</protein>
<keyword id="KW-1185">Reference proteome</keyword>
<keyword id="KW-0687">Ribonucleoprotein</keyword>
<keyword id="KW-0689">Ribosomal protein</keyword>
<keyword id="KW-0694">RNA-binding</keyword>
<keyword id="KW-0699">rRNA-binding</keyword>
<accession>B9DNC4</accession>
<name>RL20_STACT</name>
<evidence type="ECO:0000255" key="1">
    <source>
        <dbReference type="HAMAP-Rule" id="MF_00382"/>
    </source>
</evidence>
<evidence type="ECO:0000305" key="2"/>
<dbReference type="EMBL" id="AM295250">
    <property type="protein sequence ID" value="CAL28190.1"/>
    <property type="molecule type" value="Genomic_DNA"/>
</dbReference>
<dbReference type="RefSeq" id="WP_015900530.1">
    <property type="nucleotide sequence ID" value="NC_012121.1"/>
</dbReference>
<dbReference type="SMR" id="B9DNC4"/>
<dbReference type="GeneID" id="93793708"/>
<dbReference type="KEGG" id="sca:SCA_1284"/>
<dbReference type="eggNOG" id="COG0292">
    <property type="taxonomic scope" value="Bacteria"/>
</dbReference>
<dbReference type="HOGENOM" id="CLU_123265_0_1_9"/>
<dbReference type="OrthoDB" id="9808966at2"/>
<dbReference type="BioCyc" id="SCAR396513:SCA_RS06405-MONOMER"/>
<dbReference type="Proteomes" id="UP000000444">
    <property type="component" value="Chromosome"/>
</dbReference>
<dbReference type="GO" id="GO:1990904">
    <property type="term" value="C:ribonucleoprotein complex"/>
    <property type="evidence" value="ECO:0007669"/>
    <property type="project" value="UniProtKB-KW"/>
</dbReference>
<dbReference type="GO" id="GO:0005840">
    <property type="term" value="C:ribosome"/>
    <property type="evidence" value="ECO:0007669"/>
    <property type="project" value="UniProtKB-KW"/>
</dbReference>
<dbReference type="GO" id="GO:0019843">
    <property type="term" value="F:rRNA binding"/>
    <property type="evidence" value="ECO:0007669"/>
    <property type="project" value="UniProtKB-UniRule"/>
</dbReference>
<dbReference type="GO" id="GO:0003735">
    <property type="term" value="F:structural constituent of ribosome"/>
    <property type="evidence" value="ECO:0007669"/>
    <property type="project" value="InterPro"/>
</dbReference>
<dbReference type="GO" id="GO:0000027">
    <property type="term" value="P:ribosomal large subunit assembly"/>
    <property type="evidence" value="ECO:0007669"/>
    <property type="project" value="UniProtKB-UniRule"/>
</dbReference>
<dbReference type="GO" id="GO:0006412">
    <property type="term" value="P:translation"/>
    <property type="evidence" value="ECO:0007669"/>
    <property type="project" value="InterPro"/>
</dbReference>
<dbReference type="CDD" id="cd07026">
    <property type="entry name" value="Ribosomal_L20"/>
    <property type="match status" value="1"/>
</dbReference>
<dbReference type="FunFam" id="1.10.1900.20:FF:000001">
    <property type="entry name" value="50S ribosomal protein L20"/>
    <property type="match status" value="1"/>
</dbReference>
<dbReference type="Gene3D" id="6.10.160.10">
    <property type="match status" value="1"/>
</dbReference>
<dbReference type="Gene3D" id="1.10.1900.20">
    <property type="entry name" value="Ribosomal protein L20"/>
    <property type="match status" value="1"/>
</dbReference>
<dbReference type="HAMAP" id="MF_00382">
    <property type="entry name" value="Ribosomal_bL20"/>
    <property type="match status" value="1"/>
</dbReference>
<dbReference type="InterPro" id="IPR005813">
    <property type="entry name" value="Ribosomal_bL20"/>
</dbReference>
<dbReference type="InterPro" id="IPR049946">
    <property type="entry name" value="RIBOSOMAL_L20_CS"/>
</dbReference>
<dbReference type="InterPro" id="IPR035566">
    <property type="entry name" value="Ribosomal_protein_bL20_C"/>
</dbReference>
<dbReference type="NCBIfam" id="TIGR01032">
    <property type="entry name" value="rplT_bact"/>
    <property type="match status" value="1"/>
</dbReference>
<dbReference type="PANTHER" id="PTHR10986">
    <property type="entry name" value="39S RIBOSOMAL PROTEIN L20"/>
    <property type="match status" value="1"/>
</dbReference>
<dbReference type="Pfam" id="PF00453">
    <property type="entry name" value="Ribosomal_L20"/>
    <property type="match status" value="1"/>
</dbReference>
<dbReference type="PRINTS" id="PR00062">
    <property type="entry name" value="RIBOSOMALL20"/>
</dbReference>
<dbReference type="SUPFAM" id="SSF74731">
    <property type="entry name" value="Ribosomal protein L20"/>
    <property type="match status" value="1"/>
</dbReference>
<dbReference type="PROSITE" id="PS00937">
    <property type="entry name" value="RIBOSOMAL_L20"/>
    <property type="match status" value="1"/>
</dbReference>
<sequence length="118" mass="13590">MPRVKGGTVTRARRKKVIKLAKGYFGAKRTLYKTAKQQVMKSGQYAFRDRRQRKRDFRKLWITRINAAARNHGMSYSKLMNGLKQADIDINRKMLSEIAISDDKAFGELVEKAKAALK</sequence>